<accession>Q1GBU9</accession>
<protein>
    <recommendedName>
        <fullName evidence="1">Xanthine phosphoribosyltransferase</fullName>
        <shortName evidence="1">XPRTase</shortName>
        <ecNumber evidence="1">2.4.2.22</ecNumber>
    </recommendedName>
</protein>
<name>XPT_LACDA</name>
<keyword id="KW-0963">Cytoplasm</keyword>
<keyword id="KW-0328">Glycosyltransferase</keyword>
<keyword id="KW-0660">Purine salvage</keyword>
<keyword id="KW-1185">Reference proteome</keyword>
<keyword id="KW-0808">Transferase</keyword>
<evidence type="ECO:0000255" key="1">
    <source>
        <dbReference type="HAMAP-Rule" id="MF_01184"/>
    </source>
</evidence>
<sequence length="189" mass="20426">MELLEERIKKDGVVLPGNVLKVNSFLNHQIDPQLMMTLGQEFARLFKDAGVTRVLTAEASGIAPGIMAAYCLGVPMVFARKKKPSTVTDAVYTAEVFSYTKQVTNTISVEAKFLDANDRILVIDDFLANGEAAKGLISLAEQAGAEVVGVGVVVEKAFQGGHDWLVNHGYHLEALASIKEFADGQVIFN</sequence>
<dbReference type="EC" id="2.4.2.22" evidence="1"/>
<dbReference type="EMBL" id="CR954253">
    <property type="protein sequence ID" value="CAI97135.1"/>
    <property type="molecule type" value="Genomic_DNA"/>
</dbReference>
<dbReference type="RefSeq" id="WP_003619447.1">
    <property type="nucleotide sequence ID" value="NZ_JQAV01000010.1"/>
</dbReference>
<dbReference type="SMR" id="Q1GBU9"/>
<dbReference type="STRING" id="390333.Ldb0296"/>
<dbReference type="KEGG" id="ldb:Ldb0296"/>
<dbReference type="PATRIC" id="fig|390333.13.peg.488"/>
<dbReference type="eggNOG" id="COG0503">
    <property type="taxonomic scope" value="Bacteria"/>
</dbReference>
<dbReference type="HOGENOM" id="CLU_099015_0_0_9"/>
<dbReference type="BioCyc" id="LDEL390333:LDB_RS01215-MONOMER"/>
<dbReference type="UniPathway" id="UPA00602">
    <property type="reaction ID" value="UER00658"/>
</dbReference>
<dbReference type="Proteomes" id="UP000001259">
    <property type="component" value="Chromosome"/>
</dbReference>
<dbReference type="GO" id="GO:0005737">
    <property type="term" value="C:cytoplasm"/>
    <property type="evidence" value="ECO:0007669"/>
    <property type="project" value="UniProtKB-SubCell"/>
</dbReference>
<dbReference type="GO" id="GO:0000310">
    <property type="term" value="F:xanthine phosphoribosyltransferase activity"/>
    <property type="evidence" value="ECO:0007669"/>
    <property type="project" value="UniProtKB-UniRule"/>
</dbReference>
<dbReference type="GO" id="GO:0006166">
    <property type="term" value="P:purine ribonucleoside salvage"/>
    <property type="evidence" value="ECO:0007669"/>
    <property type="project" value="UniProtKB-KW"/>
</dbReference>
<dbReference type="GO" id="GO:0046110">
    <property type="term" value="P:xanthine metabolic process"/>
    <property type="evidence" value="ECO:0007669"/>
    <property type="project" value="InterPro"/>
</dbReference>
<dbReference type="GO" id="GO:0032265">
    <property type="term" value="P:XMP salvage"/>
    <property type="evidence" value="ECO:0007669"/>
    <property type="project" value="UniProtKB-UniRule"/>
</dbReference>
<dbReference type="CDD" id="cd06223">
    <property type="entry name" value="PRTases_typeI"/>
    <property type="match status" value="1"/>
</dbReference>
<dbReference type="Gene3D" id="3.40.50.2020">
    <property type="match status" value="1"/>
</dbReference>
<dbReference type="HAMAP" id="MF_01184">
    <property type="entry name" value="XPRTase"/>
    <property type="match status" value="1"/>
</dbReference>
<dbReference type="InterPro" id="IPR000836">
    <property type="entry name" value="PRibTrfase_dom"/>
</dbReference>
<dbReference type="InterPro" id="IPR029057">
    <property type="entry name" value="PRTase-like"/>
</dbReference>
<dbReference type="InterPro" id="IPR050118">
    <property type="entry name" value="Pur/Pyrimidine_PRTase"/>
</dbReference>
<dbReference type="InterPro" id="IPR010079">
    <property type="entry name" value="Xanthine_PRibTrfase"/>
</dbReference>
<dbReference type="NCBIfam" id="NF006671">
    <property type="entry name" value="PRK09219.1"/>
    <property type="match status" value="1"/>
</dbReference>
<dbReference type="NCBIfam" id="TIGR01744">
    <property type="entry name" value="XPRTase"/>
    <property type="match status" value="1"/>
</dbReference>
<dbReference type="PANTHER" id="PTHR43864">
    <property type="entry name" value="HYPOXANTHINE/GUANINE PHOSPHORIBOSYLTRANSFERASE"/>
    <property type="match status" value="1"/>
</dbReference>
<dbReference type="PANTHER" id="PTHR43864:SF1">
    <property type="entry name" value="XANTHINE PHOSPHORIBOSYLTRANSFERASE"/>
    <property type="match status" value="1"/>
</dbReference>
<dbReference type="SUPFAM" id="SSF53271">
    <property type="entry name" value="PRTase-like"/>
    <property type="match status" value="1"/>
</dbReference>
<reference key="1">
    <citation type="journal article" date="2006" name="Proc. Natl. Acad. Sci. U.S.A.">
        <title>The complete genome sequence of Lactobacillus bulgaricus reveals extensive and ongoing reductive evolution.</title>
        <authorList>
            <person name="van de Guchte M."/>
            <person name="Penaud S."/>
            <person name="Grimaldi C."/>
            <person name="Barbe V."/>
            <person name="Bryson K."/>
            <person name="Nicolas P."/>
            <person name="Robert C."/>
            <person name="Oztas S."/>
            <person name="Mangenot S."/>
            <person name="Couloux A."/>
            <person name="Loux V."/>
            <person name="Dervyn R."/>
            <person name="Bossy R."/>
            <person name="Bolotin A."/>
            <person name="Batto J.-M."/>
            <person name="Walunas T."/>
            <person name="Gibrat J.-F."/>
            <person name="Bessieres P."/>
            <person name="Weissenbach J."/>
            <person name="Ehrlich S.D."/>
            <person name="Maguin E."/>
        </authorList>
    </citation>
    <scope>NUCLEOTIDE SEQUENCE [LARGE SCALE GENOMIC DNA]</scope>
    <source>
        <strain>ATCC 11842 / DSM 20081 / BCRC 10696 / JCM 1002 / NBRC 13953 / NCIMB 11778 / NCTC 12712 / WDCM 00102 / Lb 14</strain>
    </source>
</reference>
<organism>
    <name type="scientific">Lactobacillus delbrueckii subsp. bulgaricus (strain ATCC 11842 / DSM 20081 / BCRC 10696 / JCM 1002 / NBRC 13953 / NCIMB 11778 / NCTC 12712 / WDCM 00102 / Lb 14)</name>
    <dbReference type="NCBI Taxonomy" id="390333"/>
    <lineage>
        <taxon>Bacteria</taxon>
        <taxon>Bacillati</taxon>
        <taxon>Bacillota</taxon>
        <taxon>Bacilli</taxon>
        <taxon>Lactobacillales</taxon>
        <taxon>Lactobacillaceae</taxon>
        <taxon>Lactobacillus</taxon>
    </lineage>
</organism>
<feature type="chain" id="PRO_0000339704" description="Xanthine phosphoribosyltransferase">
    <location>
        <begin position="1"/>
        <end position="189"/>
    </location>
</feature>
<feature type="binding site" evidence="1">
    <location>
        <position position="20"/>
    </location>
    <ligand>
        <name>xanthine</name>
        <dbReference type="ChEBI" id="CHEBI:17712"/>
    </ligand>
</feature>
<feature type="binding site" evidence="1">
    <location>
        <position position="27"/>
    </location>
    <ligand>
        <name>xanthine</name>
        <dbReference type="ChEBI" id="CHEBI:17712"/>
    </ligand>
</feature>
<feature type="binding site" evidence="1">
    <location>
        <begin position="128"/>
        <end position="132"/>
    </location>
    <ligand>
        <name>5-phospho-alpha-D-ribose 1-diphosphate</name>
        <dbReference type="ChEBI" id="CHEBI:58017"/>
    </ligand>
</feature>
<feature type="binding site" evidence="1">
    <location>
        <position position="156"/>
    </location>
    <ligand>
        <name>xanthine</name>
        <dbReference type="ChEBI" id="CHEBI:17712"/>
    </ligand>
</feature>
<comment type="function">
    <text evidence="1">Converts the preformed base xanthine, a product of nucleic acid breakdown, to xanthosine 5'-monophosphate (XMP), so it can be reused for RNA or DNA synthesis.</text>
</comment>
<comment type="catalytic activity">
    <reaction evidence="1">
        <text>XMP + diphosphate = xanthine + 5-phospho-alpha-D-ribose 1-diphosphate</text>
        <dbReference type="Rhea" id="RHEA:10800"/>
        <dbReference type="ChEBI" id="CHEBI:17712"/>
        <dbReference type="ChEBI" id="CHEBI:33019"/>
        <dbReference type="ChEBI" id="CHEBI:57464"/>
        <dbReference type="ChEBI" id="CHEBI:58017"/>
        <dbReference type="EC" id="2.4.2.22"/>
    </reaction>
</comment>
<comment type="pathway">
    <text evidence="1">Purine metabolism; XMP biosynthesis via salvage pathway; XMP from xanthine: step 1/1.</text>
</comment>
<comment type="subunit">
    <text evidence="1">Homodimer.</text>
</comment>
<comment type="subcellular location">
    <subcellularLocation>
        <location evidence="1">Cytoplasm</location>
    </subcellularLocation>
</comment>
<comment type="similarity">
    <text evidence="1">Belongs to the purine/pyrimidine phosphoribosyltransferase family. Xpt subfamily.</text>
</comment>
<gene>
    <name evidence="1" type="primary">xpt</name>
    <name type="ordered locus">Ldb0296</name>
</gene>
<proteinExistence type="inferred from homology"/>